<keyword id="KW-0963">Cytoplasm</keyword>
<keyword id="KW-0255">Endonuclease</keyword>
<keyword id="KW-0378">Hydrolase</keyword>
<keyword id="KW-0464">Manganese</keyword>
<keyword id="KW-0479">Metal-binding</keyword>
<keyword id="KW-0540">Nuclease</keyword>
<keyword id="KW-1185">Reference proteome</keyword>
<feature type="chain" id="PRO_1000074936" description="Ribonuclease HII">
    <location>
        <begin position="1"/>
        <end position="213"/>
    </location>
</feature>
<feature type="domain" description="RNase H type-2" evidence="2">
    <location>
        <begin position="18"/>
        <end position="213"/>
    </location>
</feature>
<feature type="binding site" evidence="1">
    <location>
        <position position="24"/>
    </location>
    <ligand>
        <name>a divalent metal cation</name>
        <dbReference type="ChEBI" id="CHEBI:60240"/>
    </ligand>
</feature>
<feature type="binding site" evidence="1">
    <location>
        <position position="25"/>
    </location>
    <ligand>
        <name>a divalent metal cation</name>
        <dbReference type="ChEBI" id="CHEBI:60240"/>
    </ligand>
</feature>
<feature type="binding site" evidence="1">
    <location>
        <position position="116"/>
    </location>
    <ligand>
        <name>a divalent metal cation</name>
        <dbReference type="ChEBI" id="CHEBI:60240"/>
    </ligand>
</feature>
<protein>
    <recommendedName>
        <fullName evidence="1">Ribonuclease HII</fullName>
        <shortName evidence="1">RNase HII</shortName>
        <ecNumber evidence="1">3.1.26.4</ecNumber>
    </recommendedName>
</protein>
<comment type="function">
    <text evidence="1">Endonuclease that specifically degrades the RNA of RNA-DNA hybrids.</text>
</comment>
<comment type="catalytic activity">
    <reaction evidence="1">
        <text>Endonucleolytic cleavage to 5'-phosphomonoester.</text>
        <dbReference type="EC" id="3.1.26.4"/>
    </reaction>
</comment>
<comment type="cofactor">
    <cofactor evidence="1">
        <name>Mn(2+)</name>
        <dbReference type="ChEBI" id="CHEBI:29035"/>
    </cofactor>
    <cofactor evidence="1">
        <name>Mg(2+)</name>
        <dbReference type="ChEBI" id="CHEBI:18420"/>
    </cofactor>
    <text evidence="1">Manganese or magnesium. Binds 1 divalent metal ion per monomer in the absence of substrate. May bind a second metal ion after substrate binding.</text>
</comment>
<comment type="subcellular location">
    <subcellularLocation>
        <location evidence="1">Cytoplasm</location>
    </subcellularLocation>
</comment>
<comment type="similarity">
    <text evidence="1">Belongs to the RNase HII family.</text>
</comment>
<evidence type="ECO:0000255" key="1">
    <source>
        <dbReference type="HAMAP-Rule" id="MF_00052"/>
    </source>
</evidence>
<evidence type="ECO:0000255" key="2">
    <source>
        <dbReference type="PROSITE-ProRule" id="PRU01319"/>
    </source>
</evidence>
<sequence>MAVFKAITTEQVEILTAGLYAGVDEVGRGPLVGNVVTAAVILDPTKPITGLNDSKKLSEKKREALFTEIHEKALAISIGYASPEEIDELNILHATMLAMQRAVAGLDMAPTSVLVDGNRTPDFSHGEDTDRNIESHAIIKGDGLVAGISAASIVAKVIRDREMDLLDMEHPQYGFAKHKGYPTKAHFEALALHGVLPEHRKSFRPVKERLAKN</sequence>
<gene>
    <name evidence="1" type="primary">rnhB</name>
    <name type="ordered locus">Ssed_3147</name>
</gene>
<name>RNH2_SHESH</name>
<accession>A8FY28</accession>
<proteinExistence type="inferred from homology"/>
<dbReference type="EC" id="3.1.26.4" evidence="1"/>
<dbReference type="EMBL" id="CP000821">
    <property type="protein sequence ID" value="ABV37751.1"/>
    <property type="molecule type" value="Genomic_DNA"/>
</dbReference>
<dbReference type="RefSeq" id="WP_012143481.1">
    <property type="nucleotide sequence ID" value="NC_009831.1"/>
</dbReference>
<dbReference type="SMR" id="A8FY28"/>
<dbReference type="STRING" id="425104.Ssed_3147"/>
<dbReference type="KEGG" id="sse:Ssed_3147"/>
<dbReference type="eggNOG" id="COG0164">
    <property type="taxonomic scope" value="Bacteria"/>
</dbReference>
<dbReference type="HOGENOM" id="CLU_036532_3_2_6"/>
<dbReference type="OrthoDB" id="9803420at2"/>
<dbReference type="Proteomes" id="UP000002015">
    <property type="component" value="Chromosome"/>
</dbReference>
<dbReference type="GO" id="GO:0005737">
    <property type="term" value="C:cytoplasm"/>
    <property type="evidence" value="ECO:0007669"/>
    <property type="project" value="UniProtKB-SubCell"/>
</dbReference>
<dbReference type="GO" id="GO:0032299">
    <property type="term" value="C:ribonuclease H2 complex"/>
    <property type="evidence" value="ECO:0007669"/>
    <property type="project" value="TreeGrafter"/>
</dbReference>
<dbReference type="GO" id="GO:0030145">
    <property type="term" value="F:manganese ion binding"/>
    <property type="evidence" value="ECO:0007669"/>
    <property type="project" value="UniProtKB-UniRule"/>
</dbReference>
<dbReference type="GO" id="GO:0003723">
    <property type="term" value="F:RNA binding"/>
    <property type="evidence" value="ECO:0007669"/>
    <property type="project" value="InterPro"/>
</dbReference>
<dbReference type="GO" id="GO:0004523">
    <property type="term" value="F:RNA-DNA hybrid ribonuclease activity"/>
    <property type="evidence" value="ECO:0007669"/>
    <property type="project" value="UniProtKB-UniRule"/>
</dbReference>
<dbReference type="GO" id="GO:0043137">
    <property type="term" value="P:DNA replication, removal of RNA primer"/>
    <property type="evidence" value="ECO:0007669"/>
    <property type="project" value="TreeGrafter"/>
</dbReference>
<dbReference type="GO" id="GO:0006298">
    <property type="term" value="P:mismatch repair"/>
    <property type="evidence" value="ECO:0007669"/>
    <property type="project" value="TreeGrafter"/>
</dbReference>
<dbReference type="CDD" id="cd07182">
    <property type="entry name" value="RNase_HII_bacteria_HII_like"/>
    <property type="match status" value="1"/>
</dbReference>
<dbReference type="FunFam" id="3.30.420.10:FF:000006">
    <property type="entry name" value="Ribonuclease HII"/>
    <property type="match status" value="1"/>
</dbReference>
<dbReference type="Gene3D" id="3.30.420.10">
    <property type="entry name" value="Ribonuclease H-like superfamily/Ribonuclease H"/>
    <property type="match status" value="1"/>
</dbReference>
<dbReference type="HAMAP" id="MF_00052_B">
    <property type="entry name" value="RNase_HII_B"/>
    <property type="match status" value="1"/>
</dbReference>
<dbReference type="InterPro" id="IPR022898">
    <property type="entry name" value="RNase_HII"/>
</dbReference>
<dbReference type="InterPro" id="IPR001352">
    <property type="entry name" value="RNase_HII/HIII"/>
</dbReference>
<dbReference type="InterPro" id="IPR024567">
    <property type="entry name" value="RNase_HII/HIII_dom"/>
</dbReference>
<dbReference type="InterPro" id="IPR012337">
    <property type="entry name" value="RNaseH-like_sf"/>
</dbReference>
<dbReference type="InterPro" id="IPR036397">
    <property type="entry name" value="RNaseH_sf"/>
</dbReference>
<dbReference type="NCBIfam" id="NF000595">
    <property type="entry name" value="PRK00015.1-3"/>
    <property type="match status" value="1"/>
</dbReference>
<dbReference type="NCBIfam" id="NF000596">
    <property type="entry name" value="PRK00015.1-4"/>
    <property type="match status" value="1"/>
</dbReference>
<dbReference type="PANTHER" id="PTHR10954">
    <property type="entry name" value="RIBONUCLEASE H2 SUBUNIT A"/>
    <property type="match status" value="1"/>
</dbReference>
<dbReference type="PANTHER" id="PTHR10954:SF18">
    <property type="entry name" value="RIBONUCLEASE HII"/>
    <property type="match status" value="1"/>
</dbReference>
<dbReference type="Pfam" id="PF01351">
    <property type="entry name" value="RNase_HII"/>
    <property type="match status" value="1"/>
</dbReference>
<dbReference type="SUPFAM" id="SSF53098">
    <property type="entry name" value="Ribonuclease H-like"/>
    <property type="match status" value="1"/>
</dbReference>
<dbReference type="PROSITE" id="PS51975">
    <property type="entry name" value="RNASE_H_2"/>
    <property type="match status" value="1"/>
</dbReference>
<reference key="1">
    <citation type="submission" date="2007-08" db="EMBL/GenBank/DDBJ databases">
        <title>Complete sequence of Shewanella sediminis HAW-EB3.</title>
        <authorList>
            <consortium name="US DOE Joint Genome Institute"/>
            <person name="Copeland A."/>
            <person name="Lucas S."/>
            <person name="Lapidus A."/>
            <person name="Barry K."/>
            <person name="Glavina del Rio T."/>
            <person name="Dalin E."/>
            <person name="Tice H."/>
            <person name="Pitluck S."/>
            <person name="Chertkov O."/>
            <person name="Brettin T."/>
            <person name="Bruce D."/>
            <person name="Detter J.C."/>
            <person name="Han C."/>
            <person name="Schmutz J."/>
            <person name="Larimer F."/>
            <person name="Land M."/>
            <person name="Hauser L."/>
            <person name="Kyrpides N."/>
            <person name="Kim E."/>
            <person name="Zhao J.-S."/>
            <person name="Richardson P."/>
        </authorList>
    </citation>
    <scope>NUCLEOTIDE SEQUENCE [LARGE SCALE GENOMIC DNA]</scope>
    <source>
        <strain>HAW-EB3</strain>
    </source>
</reference>
<organism>
    <name type="scientific">Shewanella sediminis (strain HAW-EB3)</name>
    <dbReference type="NCBI Taxonomy" id="425104"/>
    <lineage>
        <taxon>Bacteria</taxon>
        <taxon>Pseudomonadati</taxon>
        <taxon>Pseudomonadota</taxon>
        <taxon>Gammaproteobacteria</taxon>
        <taxon>Alteromonadales</taxon>
        <taxon>Shewanellaceae</taxon>
        <taxon>Shewanella</taxon>
    </lineage>
</organism>